<gene>
    <name type="ORF">C06E1.9</name>
</gene>
<evidence type="ECO:0000256" key="1">
    <source>
        <dbReference type="SAM" id="MobiDB-lite"/>
    </source>
</evidence>
<name>YKQ9_CAEEL</name>
<organism>
    <name type="scientific">Caenorhabditis elegans</name>
    <dbReference type="NCBI Taxonomy" id="6239"/>
    <lineage>
        <taxon>Eukaryota</taxon>
        <taxon>Metazoa</taxon>
        <taxon>Ecdysozoa</taxon>
        <taxon>Nematoda</taxon>
        <taxon>Chromadorea</taxon>
        <taxon>Rhabditida</taxon>
        <taxon>Rhabditina</taxon>
        <taxon>Rhabditomorpha</taxon>
        <taxon>Rhabditoidea</taxon>
        <taxon>Rhabditidae</taxon>
        <taxon>Peloderinae</taxon>
        <taxon>Caenorhabditis</taxon>
    </lineage>
</organism>
<dbReference type="EMBL" id="FO080280">
    <property type="protein sequence ID" value="CCD62569.1"/>
    <property type="molecule type" value="Genomic_DNA"/>
</dbReference>
<dbReference type="PIR" id="G88533">
    <property type="entry name" value="G88533"/>
</dbReference>
<dbReference type="RefSeq" id="NP_498894.1">
    <property type="nucleotide sequence ID" value="NM_066493.7"/>
</dbReference>
<dbReference type="SMR" id="P34304"/>
<dbReference type="BioGRID" id="41410">
    <property type="interactions" value="3"/>
</dbReference>
<dbReference type="FunCoup" id="P34304">
    <property type="interactions" value="126"/>
</dbReference>
<dbReference type="STRING" id="6239.C06E1.9.1"/>
<dbReference type="iPTMnet" id="P34304"/>
<dbReference type="PaxDb" id="6239-C06E1.9"/>
<dbReference type="PeptideAtlas" id="P34304"/>
<dbReference type="EnsemblMetazoa" id="C06E1.9.1">
    <property type="protein sequence ID" value="C06E1.9.1"/>
    <property type="gene ID" value="WBGene00015524"/>
</dbReference>
<dbReference type="GeneID" id="176206"/>
<dbReference type="KEGG" id="cel:CELE_C06E1.9"/>
<dbReference type="UCSC" id="C06E1.9">
    <property type="organism name" value="c. elegans"/>
</dbReference>
<dbReference type="AGR" id="WB:WBGene00015524"/>
<dbReference type="CTD" id="176206"/>
<dbReference type="WormBase" id="C06E1.9">
    <property type="protein sequence ID" value="CE24790"/>
    <property type="gene ID" value="WBGene00015524"/>
</dbReference>
<dbReference type="eggNOG" id="ENOG502SFT8">
    <property type="taxonomic scope" value="Eukaryota"/>
</dbReference>
<dbReference type="HOGENOM" id="CLU_409541_0_0_1"/>
<dbReference type="InParanoid" id="P34304"/>
<dbReference type="OMA" id="WKKSPDY"/>
<dbReference type="OrthoDB" id="5824609at2759"/>
<dbReference type="PRO" id="PR:P34304"/>
<dbReference type="Proteomes" id="UP000001940">
    <property type="component" value="Chromosome III"/>
</dbReference>
<dbReference type="Bgee" id="WBGene00015524">
    <property type="expression patterns" value="Expressed in germ line (C elegans) and 4 other cell types or tissues"/>
</dbReference>
<dbReference type="GO" id="GO:0043130">
    <property type="term" value="F:ubiquitin binding"/>
    <property type="evidence" value="ECO:0000318"/>
    <property type="project" value="GO_Central"/>
</dbReference>
<dbReference type="GO" id="GO:0006355">
    <property type="term" value="P:regulation of DNA-templated transcription"/>
    <property type="evidence" value="ECO:0000318"/>
    <property type="project" value="GO_Central"/>
</dbReference>
<dbReference type="CDD" id="cd14364">
    <property type="entry name" value="CUE_ASCC2"/>
    <property type="match status" value="1"/>
</dbReference>
<dbReference type="Gene3D" id="1.10.8.10">
    <property type="entry name" value="DNA helicase RuvA subunit, C-terminal domain"/>
    <property type="match status" value="1"/>
</dbReference>
<dbReference type="InterPro" id="IPR052586">
    <property type="entry name" value="ASCC2"/>
</dbReference>
<dbReference type="InterPro" id="IPR041800">
    <property type="entry name" value="ASCC2_CUE"/>
</dbReference>
<dbReference type="InterPro" id="IPR009060">
    <property type="entry name" value="UBA-like_sf"/>
</dbReference>
<dbReference type="PANTHER" id="PTHR21494:SF0">
    <property type="entry name" value="ACTIVATING SIGNAL COINTEGRATOR 1 COMPLEX SUBUNIT 2"/>
    <property type="match status" value="1"/>
</dbReference>
<dbReference type="PANTHER" id="PTHR21494">
    <property type="entry name" value="ACTIVATING SIGNAL COINTEGRATOR 1 COMPLEX SUBUNIT 2 ASC-1 COMPLEX SUBUNIT P100"/>
    <property type="match status" value="1"/>
</dbReference>
<dbReference type="SUPFAM" id="SSF46934">
    <property type="entry name" value="UBA-like"/>
    <property type="match status" value="1"/>
</dbReference>
<reference key="1">
    <citation type="journal article" date="1994" name="Nature">
        <title>2.2 Mb of contiguous nucleotide sequence from chromosome III of C. elegans.</title>
        <authorList>
            <person name="Wilson R."/>
            <person name="Ainscough R."/>
            <person name="Anderson K."/>
            <person name="Baynes C."/>
            <person name="Berks M."/>
            <person name="Bonfield J."/>
            <person name="Burton J."/>
            <person name="Connell M."/>
            <person name="Copsey T."/>
            <person name="Cooper J."/>
            <person name="Coulson A."/>
            <person name="Craxton M."/>
            <person name="Dear S."/>
            <person name="Du Z."/>
            <person name="Durbin R."/>
            <person name="Favello A."/>
            <person name="Fraser A."/>
            <person name="Fulton L."/>
            <person name="Gardner A."/>
            <person name="Green P."/>
            <person name="Hawkins T."/>
            <person name="Hillier L."/>
            <person name="Jier M."/>
            <person name="Johnston L."/>
            <person name="Jones M."/>
            <person name="Kershaw J."/>
            <person name="Kirsten J."/>
            <person name="Laisster N."/>
            <person name="Latreille P."/>
            <person name="Lightning J."/>
            <person name="Lloyd C."/>
            <person name="Mortimore B."/>
            <person name="O'Callaghan M."/>
            <person name="Parsons J."/>
            <person name="Percy C."/>
            <person name="Rifken L."/>
            <person name="Roopra A."/>
            <person name="Saunders D."/>
            <person name="Shownkeen R."/>
            <person name="Sims M."/>
            <person name="Smaldon N."/>
            <person name="Smith A."/>
            <person name="Smith M."/>
            <person name="Sonnhammer E."/>
            <person name="Staden R."/>
            <person name="Sulston J."/>
            <person name="Thierry-Mieg J."/>
            <person name="Thomas K."/>
            <person name="Vaudin M."/>
            <person name="Vaughan K."/>
            <person name="Waterston R."/>
            <person name="Watson A."/>
            <person name="Weinstock L."/>
            <person name="Wilkinson-Sproat J."/>
            <person name="Wohldman P."/>
        </authorList>
    </citation>
    <scope>NUCLEOTIDE SEQUENCE [LARGE SCALE GENOMIC DNA]</scope>
    <source>
        <strain>Bristol N2</strain>
    </source>
</reference>
<reference key="2">
    <citation type="journal article" date="1998" name="Science">
        <title>Genome sequence of the nematode C. elegans: a platform for investigating biology.</title>
        <authorList>
            <consortium name="The C. elegans sequencing consortium"/>
        </authorList>
    </citation>
    <scope>NUCLEOTIDE SEQUENCE [LARGE SCALE GENOMIC DNA]</scope>
    <source>
        <strain>Bristol N2</strain>
    </source>
</reference>
<sequence length="643" mass="72355">MRLVEIGALSADSDLVLWEASCETISHQISLKLARKEGGLMEIFNSVVASLPRKSDSFRFSAISSKTSWESAHRNLLENLTKTVPVLLENGWKKSPDFQKNSLIDLFSLLEDEDATRIFKMTQESRSITEDDVEDYFSMFDKKFDRLLTYGAPQFENCVRDSPMRQKYANLCVEVLVAVGASVKNAQKITDFLEKQSMKVSKIWMTRIPEIFEKITNFYDYPMMFDVAMALDGFPLRKVFLARRFALQSILEVFIEMAPNTKYKVRERVRQELEKASRFVGYASEMGHDNLLSSFSPKIVSSIEDSKHILEVETIERLRRCGYLENLGAPLDELVRAQIASIREILPHFSAEFVHLALRHFSYDSEVTLASLLSRENLPLELLRLENVELRAGIGSGEWPPLDFTASDEIEKLARADKRAKDEETRKNNETKSASNLFSLAPILSDRPPSPPVDQQAELRAHAEAYRTSVLTKLQKIRADAAGPSSPSEKIAVDAENLVPLATSKKYSALNSLKISEADKVAIRPTYNKYRYETPNDGGNGVYDDEYDDEFDGREFNIERLNQELETSSEEDEAGSSAPPGLSQPPPYQGSRGGRGGRGARGGNRGGAPSADGYTGGHDRQMKEKHKSDIKQRGADRKKRGVY</sequence>
<proteinExistence type="predicted"/>
<accession>P34304</accession>
<keyword id="KW-1185">Reference proteome</keyword>
<feature type="chain" id="PRO_0000065159" description="Uncharacterized protein C06E1.9">
    <location>
        <begin position="1"/>
        <end position="643"/>
    </location>
</feature>
<feature type="region of interest" description="Disordered" evidence="1">
    <location>
        <begin position="561"/>
        <end position="643"/>
    </location>
</feature>
<feature type="compositionally biased region" description="Gly residues" evidence="1">
    <location>
        <begin position="591"/>
        <end position="606"/>
    </location>
</feature>
<feature type="compositionally biased region" description="Basic and acidic residues" evidence="1">
    <location>
        <begin position="617"/>
        <end position="635"/>
    </location>
</feature>
<protein>
    <recommendedName>
        <fullName>Uncharacterized protein C06E1.9</fullName>
    </recommendedName>
</protein>